<gene>
    <name type="primary">rpl1602</name>
    <name type="synonym">rpl16a</name>
    <name type="ORF">SPAC23A1.11</name>
</gene>
<reference key="1">
    <citation type="journal article" date="2002" name="Nature">
        <title>The genome sequence of Schizosaccharomyces pombe.</title>
        <authorList>
            <person name="Wood V."/>
            <person name="Gwilliam R."/>
            <person name="Rajandream M.A."/>
            <person name="Lyne M.H."/>
            <person name="Lyne R."/>
            <person name="Stewart A."/>
            <person name="Sgouros J.G."/>
            <person name="Peat N."/>
            <person name="Hayles J."/>
            <person name="Baker S.G."/>
            <person name="Basham D."/>
            <person name="Bowman S."/>
            <person name="Brooks K."/>
            <person name="Brown D."/>
            <person name="Brown S."/>
            <person name="Chillingworth T."/>
            <person name="Churcher C.M."/>
            <person name="Collins M."/>
            <person name="Connor R."/>
            <person name="Cronin A."/>
            <person name="Davis P."/>
            <person name="Feltwell T."/>
            <person name="Fraser A."/>
            <person name="Gentles S."/>
            <person name="Goble A."/>
            <person name="Hamlin N."/>
            <person name="Harris D.E."/>
            <person name="Hidalgo J."/>
            <person name="Hodgson G."/>
            <person name="Holroyd S."/>
            <person name="Hornsby T."/>
            <person name="Howarth S."/>
            <person name="Huckle E.J."/>
            <person name="Hunt S."/>
            <person name="Jagels K."/>
            <person name="James K.D."/>
            <person name="Jones L."/>
            <person name="Jones M."/>
            <person name="Leather S."/>
            <person name="McDonald S."/>
            <person name="McLean J."/>
            <person name="Mooney P."/>
            <person name="Moule S."/>
            <person name="Mungall K.L."/>
            <person name="Murphy L.D."/>
            <person name="Niblett D."/>
            <person name="Odell C."/>
            <person name="Oliver K."/>
            <person name="O'Neil S."/>
            <person name="Pearson D."/>
            <person name="Quail M.A."/>
            <person name="Rabbinowitsch E."/>
            <person name="Rutherford K.M."/>
            <person name="Rutter S."/>
            <person name="Saunders D."/>
            <person name="Seeger K."/>
            <person name="Sharp S."/>
            <person name="Skelton J."/>
            <person name="Simmonds M.N."/>
            <person name="Squares R."/>
            <person name="Squares S."/>
            <person name="Stevens K."/>
            <person name="Taylor K."/>
            <person name="Taylor R.G."/>
            <person name="Tivey A."/>
            <person name="Walsh S.V."/>
            <person name="Warren T."/>
            <person name="Whitehead S."/>
            <person name="Woodward J.R."/>
            <person name="Volckaert G."/>
            <person name="Aert R."/>
            <person name="Robben J."/>
            <person name="Grymonprez B."/>
            <person name="Weltjens I."/>
            <person name="Vanstreels E."/>
            <person name="Rieger M."/>
            <person name="Schaefer M."/>
            <person name="Mueller-Auer S."/>
            <person name="Gabel C."/>
            <person name="Fuchs M."/>
            <person name="Duesterhoeft A."/>
            <person name="Fritzc C."/>
            <person name="Holzer E."/>
            <person name="Moestl D."/>
            <person name="Hilbert H."/>
            <person name="Borzym K."/>
            <person name="Langer I."/>
            <person name="Beck A."/>
            <person name="Lehrach H."/>
            <person name="Reinhardt R."/>
            <person name="Pohl T.M."/>
            <person name="Eger P."/>
            <person name="Zimmermann W."/>
            <person name="Wedler H."/>
            <person name="Wambutt R."/>
            <person name="Purnelle B."/>
            <person name="Goffeau A."/>
            <person name="Cadieu E."/>
            <person name="Dreano S."/>
            <person name="Gloux S."/>
            <person name="Lelaure V."/>
            <person name="Mottier S."/>
            <person name="Galibert F."/>
            <person name="Aves S.J."/>
            <person name="Xiang Z."/>
            <person name="Hunt C."/>
            <person name="Moore K."/>
            <person name="Hurst S.M."/>
            <person name="Lucas M."/>
            <person name="Rochet M."/>
            <person name="Gaillardin C."/>
            <person name="Tallada V.A."/>
            <person name="Garzon A."/>
            <person name="Thode G."/>
            <person name="Daga R.R."/>
            <person name="Cruzado L."/>
            <person name="Jimenez J."/>
            <person name="Sanchez M."/>
            <person name="del Rey F."/>
            <person name="Benito J."/>
            <person name="Dominguez A."/>
            <person name="Revuelta J.L."/>
            <person name="Moreno S."/>
            <person name="Armstrong J."/>
            <person name="Forsburg S.L."/>
            <person name="Cerutti L."/>
            <person name="Lowe T."/>
            <person name="McCombie W.R."/>
            <person name="Paulsen I."/>
            <person name="Potashkin J."/>
            <person name="Shpakovski G.V."/>
            <person name="Ussery D."/>
            <person name="Barrell B.G."/>
            <person name="Nurse P."/>
        </authorList>
    </citation>
    <scope>NUCLEOTIDE SEQUENCE [LARGE SCALE GENOMIC DNA]</scope>
    <source>
        <strain>972 / ATCC 24843</strain>
    </source>
</reference>
<reference key="2">
    <citation type="journal article" date="2006" name="Nat. Biotechnol.">
        <title>ORFeome cloning and global analysis of protein localization in the fission yeast Schizosaccharomyces pombe.</title>
        <authorList>
            <person name="Matsuyama A."/>
            <person name="Arai R."/>
            <person name="Yashiroda Y."/>
            <person name="Shirai A."/>
            <person name="Kamata A."/>
            <person name="Sekido S."/>
            <person name="Kobayashi Y."/>
            <person name="Hashimoto A."/>
            <person name="Hamamoto M."/>
            <person name="Hiraoka Y."/>
            <person name="Horinouchi S."/>
            <person name="Yoshida M."/>
        </authorList>
    </citation>
    <scope>SUBCELLULAR LOCATION [LARGE SCALE ANALYSIS]</scope>
</reference>
<reference key="3">
    <citation type="journal article" date="2008" name="J. Proteome Res.">
        <title>Phosphoproteome analysis of fission yeast.</title>
        <authorList>
            <person name="Wilson-Grady J.T."/>
            <person name="Villen J."/>
            <person name="Gygi S.P."/>
        </authorList>
    </citation>
    <scope>PHOSPHORYLATION [LARGE SCALE ANALYSIS] AT SER-151</scope>
    <scope>IDENTIFICATION BY MASS SPECTROMETRY</scope>
</reference>
<sequence length="197" mass="22005">MSEFQKVVVIDAKGHLLGRLASVVAKQLLGGQKVVVVRCEELNISGHFFRNKLKYLAYLRKACRYNPSRGAFHFRAPSRIFQKAVRGMLPHKTARGQAALEHLQAVEGIPPPFDKQKRVVVPAALRVLRLKPGRKYCTVGRLSSEVGWKYSDIVSKLEERRKVKSAAFYQAKLAKQKKIASAKAASSVNGKLAEFGY</sequence>
<proteinExistence type="evidence at protein level"/>
<dbReference type="EMBL" id="CU329670">
    <property type="protein sequence ID" value="CAA16985.1"/>
    <property type="molecule type" value="Genomic_DNA"/>
</dbReference>
<dbReference type="PIR" id="T38231">
    <property type="entry name" value="T38231"/>
</dbReference>
<dbReference type="RefSeq" id="NP_594441.1">
    <property type="nucleotide sequence ID" value="NM_001019870.2"/>
</dbReference>
<dbReference type="PDB" id="9AXT">
    <property type="method" value="EM"/>
    <property type="resolution" value="2.40 A"/>
    <property type="chains" value="Ba=1-197"/>
</dbReference>
<dbReference type="PDB" id="9AXU">
    <property type="method" value="EM"/>
    <property type="resolution" value="1.94 A"/>
    <property type="chains" value="a=1-197"/>
</dbReference>
<dbReference type="PDB" id="9AXV">
    <property type="method" value="EM"/>
    <property type="resolution" value="2.40 A"/>
    <property type="chains" value="Ba=1-197"/>
</dbReference>
<dbReference type="PDBsum" id="9AXT"/>
<dbReference type="PDBsum" id="9AXU"/>
<dbReference type="PDBsum" id="9AXV"/>
<dbReference type="EMDB" id="EMD-43972"/>
<dbReference type="EMDB" id="EMD-43973"/>
<dbReference type="EMDB" id="EMD-43976"/>
<dbReference type="SMR" id="O42848"/>
<dbReference type="BioGRID" id="278489">
    <property type="interactions" value="8"/>
</dbReference>
<dbReference type="FunCoup" id="O42848">
    <property type="interactions" value="381"/>
</dbReference>
<dbReference type="STRING" id="284812.O42848"/>
<dbReference type="iPTMnet" id="O42848"/>
<dbReference type="PaxDb" id="4896-SPAC23A1.11.1"/>
<dbReference type="EnsemblFungi" id="SPAC23A1.11.1">
    <property type="protein sequence ID" value="SPAC23A1.11.1:pep"/>
    <property type="gene ID" value="SPAC23A1.11"/>
</dbReference>
<dbReference type="GeneID" id="2542006"/>
<dbReference type="KEGG" id="spo:2542006"/>
<dbReference type="PomBase" id="SPAC23A1.11">
    <property type="gene designation" value="rpl1602"/>
</dbReference>
<dbReference type="VEuPathDB" id="FungiDB:SPAC23A1.11"/>
<dbReference type="eggNOG" id="KOG3204">
    <property type="taxonomic scope" value="Eukaryota"/>
</dbReference>
<dbReference type="HOGENOM" id="CLU_076922_0_0_1"/>
<dbReference type="InParanoid" id="O42848"/>
<dbReference type="OMA" id="HMMGRLA"/>
<dbReference type="PhylomeDB" id="O42848"/>
<dbReference type="Reactome" id="R-SPO-156827">
    <property type="pathway name" value="L13a-mediated translational silencing of Ceruloplasmin expression"/>
</dbReference>
<dbReference type="Reactome" id="R-SPO-1799339">
    <property type="pathway name" value="SRP-dependent cotranslational protein targeting to membrane"/>
</dbReference>
<dbReference type="Reactome" id="R-SPO-72689">
    <property type="pathway name" value="Formation of a pool of free 40S subunits"/>
</dbReference>
<dbReference type="Reactome" id="R-SPO-72706">
    <property type="pathway name" value="GTP hydrolysis and joining of the 60S ribosomal subunit"/>
</dbReference>
<dbReference type="Reactome" id="R-SPO-975956">
    <property type="pathway name" value="Nonsense Mediated Decay (NMD) independent of the Exon Junction Complex (EJC)"/>
</dbReference>
<dbReference type="Reactome" id="R-SPO-975957">
    <property type="pathway name" value="Nonsense Mediated Decay (NMD) enhanced by the Exon Junction Complex (EJC)"/>
</dbReference>
<dbReference type="PRO" id="PR:O42848"/>
<dbReference type="Proteomes" id="UP000002485">
    <property type="component" value="Chromosome I"/>
</dbReference>
<dbReference type="GO" id="GO:0005829">
    <property type="term" value="C:cytosol"/>
    <property type="evidence" value="ECO:0007005"/>
    <property type="project" value="PomBase"/>
</dbReference>
<dbReference type="GO" id="GO:0022625">
    <property type="term" value="C:cytosolic large ribosomal subunit"/>
    <property type="evidence" value="ECO:0000269"/>
    <property type="project" value="PomBase"/>
</dbReference>
<dbReference type="GO" id="GO:0005730">
    <property type="term" value="C:nucleolus"/>
    <property type="evidence" value="ECO:0007005"/>
    <property type="project" value="PomBase"/>
</dbReference>
<dbReference type="GO" id="GO:0030684">
    <property type="term" value="C:preribosome"/>
    <property type="evidence" value="ECO:0000314"/>
    <property type="project" value="PomBase"/>
</dbReference>
<dbReference type="GO" id="GO:0005840">
    <property type="term" value="C:ribosome"/>
    <property type="evidence" value="ECO:0000318"/>
    <property type="project" value="GO_Central"/>
</dbReference>
<dbReference type="GO" id="GO:0003729">
    <property type="term" value="F:mRNA binding"/>
    <property type="evidence" value="ECO:0000318"/>
    <property type="project" value="GO_Central"/>
</dbReference>
<dbReference type="GO" id="GO:0003735">
    <property type="term" value="F:structural constituent of ribosome"/>
    <property type="evidence" value="ECO:0000318"/>
    <property type="project" value="GO_Central"/>
</dbReference>
<dbReference type="GO" id="GO:0002181">
    <property type="term" value="P:cytoplasmic translation"/>
    <property type="evidence" value="ECO:0000266"/>
    <property type="project" value="PomBase"/>
</dbReference>
<dbReference type="GO" id="GO:0017148">
    <property type="term" value="P:negative regulation of translation"/>
    <property type="evidence" value="ECO:0000318"/>
    <property type="project" value="GO_Central"/>
</dbReference>
<dbReference type="CDD" id="cd00392">
    <property type="entry name" value="Ribosomal_L13"/>
    <property type="match status" value="1"/>
</dbReference>
<dbReference type="FunFam" id="3.90.1180.10:FF:000002">
    <property type="entry name" value="60S ribosomal protein L16"/>
    <property type="match status" value="1"/>
</dbReference>
<dbReference type="Gene3D" id="6.10.250.3250">
    <property type="match status" value="1"/>
</dbReference>
<dbReference type="Gene3D" id="3.90.1180.10">
    <property type="entry name" value="Ribosomal protein L13"/>
    <property type="match status" value="1"/>
</dbReference>
<dbReference type="HAMAP" id="MF_01366">
    <property type="entry name" value="Ribosomal_uL13"/>
    <property type="match status" value="1"/>
</dbReference>
<dbReference type="InterPro" id="IPR005822">
    <property type="entry name" value="Ribosomal_uL13"/>
</dbReference>
<dbReference type="InterPro" id="IPR023563">
    <property type="entry name" value="Ribosomal_uL13_CS"/>
</dbReference>
<dbReference type="InterPro" id="IPR005755">
    <property type="entry name" value="Ribosomal_uL13_euk/arc"/>
</dbReference>
<dbReference type="InterPro" id="IPR036899">
    <property type="entry name" value="Ribosomal_uL13_sf"/>
</dbReference>
<dbReference type="NCBIfam" id="TIGR01077">
    <property type="entry name" value="L13_A_E"/>
    <property type="match status" value="1"/>
</dbReference>
<dbReference type="PANTHER" id="PTHR11545:SF3">
    <property type="entry name" value="LARGE RIBOSOMAL SUBUNIT PROTEIN UL13"/>
    <property type="match status" value="1"/>
</dbReference>
<dbReference type="PANTHER" id="PTHR11545">
    <property type="entry name" value="RIBOSOMAL PROTEIN L13"/>
    <property type="match status" value="1"/>
</dbReference>
<dbReference type="Pfam" id="PF00572">
    <property type="entry name" value="Ribosomal_L13"/>
    <property type="match status" value="1"/>
</dbReference>
<dbReference type="SUPFAM" id="SSF52161">
    <property type="entry name" value="Ribosomal protein L13"/>
    <property type="match status" value="1"/>
</dbReference>
<dbReference type="PROSITE" id="PS00783">
    <property type="entry name" value="RIBOSOMAL_L13"/>
    <property type="match status" value="1"/>
</dbReference>
<protein>
    <recommendedName>
        <fullName evidence="4">Large ribosomal subunit protein uL13A</fullName>
    </recommendedName>
    <alternativeName>
        <fullName>60S ribosomal protein L16-A</fullName>
    </alternativeName>
</protein>
<accession>O42848</accession>
<evidence type="ECO:0000250" key="1">
    <source>
        <dbReference type="UniProtKB" id="P26784"/>
    </source>
</evidence>
<evidence type="ECO:0000269" key="2">
    <source>
    </source>
</evidence>
<evidence type="ECO:0000269" key="3">
    <source>
    </source>
</evidence>
<evidence type="ECO:0000305" key="4"/>
<feature type="chain" id="PRO_0000133788" description="Large ribosomal subunit protein uL13A">
    <location>
        <begin position="1"/>
        <end position="197"/>
    </location>
</feature>
<feature type="modified residue" description="Phosphoserine" evidence="3">
    <location>
        <position position="151"/>
    </location>
</feature>
<keyword id="KW-0002">3D-structure</keyword>
<keyword id="KW-0963">Cytoplasm</keyword>
<keyword id="KW-0539">Nucleus</keyword>
<keyword id="KW-0597">Phosphoprotein</keyword>
<keyword id="KW-1185">Reference proteome</keyword>
<keyword id="KW-0687">Ribonucleoprotein</keyword>
<keyword id="KW-0689">Ribosomal protein</keyword>
<name>RL16A_SCHPO</name>
<comment type="function">
    <text evidence="1">Component of the ribosome, a large ribonucleoprotein complex responsible for the synthesis of proteins in the cell. The small ribosomal subunit (SSU) binds messenger RNAs (mRNAs) and translates the encoded message by selecting cognate aminoacyl-transfer RNA (tRNA) molecules. The large subunit (LSU) contains the ribosomal catalytic site termed the peptidyl transferase center (PTC), which catalyzes the formation of peptide bonds, thereby polymerizing the amino acids delivered by tRNAs into a polypeptide chain. The nascent polypeptides leave the ribosome through a tunnel in the LSU and interact with protein factors that function in enzymatic processing, targeting, and the membrane insertion of nascent chains at the exit of the ribosomal tunnel.</text>
</comment>
<comment type="subunit">
    <text evidence="1">Component of the large ribosomal subunit (LSU). Mature yeast ribosomes consist of a small (40S) and a large (60S) subunit. The 40S small subunit contains 1 molecule of ribosomal RNA (18S rRNA) and at least 33 different proteins. The large 60S subunit contains 3 rRNA molecules (25S, 5.8S and 5S rRNA) and at least 46 different proteins.</text>
</comment>
<comment type="subcellular location">
    <subcellularLocation>
        <location evidence="2">Cytoplasm</location>
    </subcellularLocation>
    <subcellularLocation>
        <location evidence="2">Nucleus</location>
        <location evidence="2">Nucleolus</location>
    </subcellularLocation>
</comment>
<comment type="miscellaneous">
    <text>There are 3 genes for uL13 in S.pombe.</text>
</comment>
<comment type="similarity">
    <text evidence="4">Belongs to the universal ribosomal protein uL13 family.</text>
</comment>
<organism>
    <name type="scientific">Schizosaccharomyces pombe (strain 972 / ATCC 24843)</name>
    <name type="common">Fission yeast</name>
    <dbReference type="NCBI Taxonomy" id="284812"/>
    <lineage>
        <taxon>Eukaryota</taxon>
        <taxon>Fungi</taxon>
        <taxon>Dikarya</taxon>
        <taxon>Ascomycota</taxon>
        <taxon>Taphrinomycotina</taxon>
        <taxon>Schizosaccharomycetes</taxon>
        <taxon>Schizosaccharomycetales</taxon>
        <taxon>Schizosaccharomycetaceae</taxon>
        <taxon>Schizosaccharomyces</taxon>
    </lineage>
</organism>